<organismHost>
    <name type="scientific">Cucumis sativus</name>
    <name type="common">Cucumber</name>
    <dbReference type="NCBI Taxonomy" id="3659"/>
</organismHost>
<organismHost>
    <name type="scientific">Solanum lycopersicum</name>
    <name type="common">Tomato</name>
    <name type="synonym">Lycopersicon esculentum</name>
    <dbReference type="NCBI Taxonomy" id="4081"/>
</organismHost>
<organismHost>
    <name type="scientific">Spinacia oleracea</name>
    <name type="common">Spinach</name>
    <dbReference type="NCBI Taxonomy" id="3562"/>
</organismHost>
<name>MVP_CMVNT</name>
<protein>
    <recommendedName>
        <fullName>Movement protein</fullName>
        <shortName>MP</shortName>
    </recommendedName>
    <alternativeName>
        <fullName>Protein 3A</fullName>
    </alternativeName>
</protein>
<evidence type="ECO:0000250" key="1"/>
<evidence type="ECO:0000305" key="2"/>
<organism>
    <name type="scientific">Cucumber mosaic virus (strain NT9)</name>
    <name type="common">CMV</name>
    <dbReference type="NCBI Taxonomy" id="117124"/>
    <lineage>
        <taxon>Viruses</taxon>
        <taxon>Riboviria</taxon>
        <taxon>Orthornavirae</taxon>
        <taxon>Kitrinoviricota</taxon>
        <taxon>Alsuviricetes</taxon>
        <taxon>Martellivirales</taxon>
        <taxon>Bromoviridae</taxon>
        <taxon>Cucumovirus</taxon>
        <taxon>Cucumber mosaic virus</taxon>
    </lineage>
</organism>
<dbReference type="EMBL" id="D28780">
    <property type="protein sequence ID" value="BAA21696.1"/>
    <property type="molecule type" value="Genomic_RNA"/>
</dbReference>
<dbReference type="Proteomes" id="UP000246397">
    <property type="component" value="Genome"/>
</dbReference>
<dbReference type="GO" id="GO:0044219">
    <property type="term" value="C:host cell plasmodesma"/>
    <property type="evidence" value="ECO:0007669"/>
    <property type="project" value="UniProtKB-SubCell"/>
</dbReference>
<dbReference type="GO" id="GO:0046740">
    <property type="term" value="P:transport of virus in host, cell to cell"/>
    <property type="evidence" value="ECO:0007669"/>
    <property type="project" value="UniProtKB-KW"/>
</dbReference>
<dbReference type="InterPro" id="IPR000603">
    <property type="entry name" value="MPV"/>
</dbReference>
<dbReference type="Pfam" id="PF00803">
    <property type="entry name" value="3A"/>
    <property type="match status" value="1"/>
</dbReference>
<gene>
    <name type="ORF">ORF3a</name>
</gene>
<proteinExistence type="inferred from homology"/>
<keyword id="KW-1031">Host cell junction</keyword>
<keyword id="KW-0813">Transport</keyword>
<keyword id="KW-0916">Viral movement protein</keyword>
<comment type="function">
    <text evidence="1">Transports viral genome to neighboring plant cells directly through plasmosdesmata, without any budding. The movement protein allows efficient cell to cell propagation, by bypassing the host cell wall barrier. Acts by forming a tubular structure at the host plasmodesmata, enlarging it enough to allow free passage of virion capsids (By similarity).</text>
</comment>
<comment type="subcellular location">
    <subcellularLocation>
        <location evidence="1">Host cell junction</location>
        <location evidence="1">Host plasmodesma</location>
    </subcellularLocation>
    <text evidence="1">Assembles into long tubular structures at the surface of the infected protoplast.</text>
</comment>
<comment type="similarity">
    <text evidence="2">Belongs to the cucumovirus movement protein family.</text>
</comment>
<reference key="1">
    <citation type="journal article" date="1995" name="Arch. Virol.">
        <title>Complete genomic RNA sequences of cucumber mosaic virus strain NT9 from Taiwan.</title>
        <authorList>
            <person name="Hsu Y.-H."/>
            <person name="Wu C.W."/>
            <person name="Lin B.Y."/>
            <person name="Chen H.Y."/>
            <person name="Lee M.F."/>
            <person name="Tsai C.H."/>
        </authorList>
    </citation>
    <scope>NUCLEOTIDE SEQUENCE [GENOMIC RNA]</scope>
</reference>
<accession>O40979</accession>
<sequence length="283" mass="30952">MAFQGTSRTLTQQSSAATSDELQKILFSPEAIKKMATECDLGRHHWMRADNAISVRPLVPEVTHGRIASFFKSGYDAGELSSKGYMSVPQVLCAVTRTVSTDAEGSLRIYLADLGDKELSPIDGQCVTLHNHDLPALVSFQPTYDCPMETVGNRKRCFAVVIERHGYIGYTGTTASVCSNWQARFSSKNNNYTHIAAGKTLVLPFNRLAEQTKPSAVARLLKSQLNNIESSQYVLTNAKINQNARSESEELNVESPPIAIGSSSASRSETFRPQVVNGTLVFS</sequence>
<feature type="chain" id="PRO_0000083244" description="Movement protein">
    <location>
        <begin position="1"/>
        <end position="283"/>
    </location>
</feature>